<feature type="chain" id="PRO_1000089985" description="Acetate kinase">
    <location>
        <begin position="1"/>
        <end position="398"/>
    </location>
</feature>
<feature type="active site" description="Proton donor/acceptor" evidence="1">
    <location>
        <position position="148"/>
    </location>
</feature>
<feature type="binding site" evidence="1">
    <location>
        <position position="7"/>
    </location>
    <ligand>
        <name>Mg(2+)</name>
        <dbReference type="ChEBI" id="CHEBI:18420"/>
    </ligand>
</feature>
<feature type="binding site" evidence="1">
    <location>
        <position position="14"/>
    </location>
    <ligand>
        <name>ATP</name>
        <dbReference type="ChEBI" id="CHEBI:30616"/>
    </ligand>
</feature>
<feature type="binding site" evidence="1">
    <location>
        <position position="91"/>
    </location>
    <ligand>
        <name>substrate</name>
    </ligand>
</feature>
<feature type="binding site" evidence="1">
    <location>
        <begin position="208"/>
        <end position="212"/>
    </location>
    <ligand>
        <name>ATP</name>
        <dbReference type="ChEBI" id="CHEBI:30616"/>
    </ligand>
</feature>
<feature type="binding site" evidence="1">
    <location>
        <begin position="283"/>
        <end position="285"/>
    </location>
    <ligand>
        <name>ATP</name>
        <dbReference type="ChEBI" id="CHEBI:30616"/>
    </ligand>
</feature>
<feature type="binding site" evidence="1">
    <location>
        <begin position="331"/>
        <end position="335"/>
    </location>
    <ligand>
        <name>ATP</name>
        <dbReference type="ChEBI" id="CHEBI:30616"/>
    </ligand>
</feature>
<feature type="binding site" evidence="1">
    <location>
        <position position="384"/>
    </location>
    <ligand>
        <name>Mg(2+)</name>
        <dbReference type="ChEBI" id="CHEBI:18420"/>
    </ligand>
</feature>
<feature type="site" description="Transition state stabilizer" evidence="1">
    <location>
        <position position="180"/>
    </location>
</feature>
<feature type="site" description="Transition state stabilizer" evidence="1">
    <location>
        <position position="241"/>
    </location>
</feature>
<dbReference type="EC" id="2.7.2.1" evidence="1"/>
<dbReference type="EMBL" id="CP001034">
    <property type="protein sequence ID" value="ACB85869.1"/>
    <property type="molecule type" value="Genomic_DNA"/>
</dbReference>
<dbReference type="RefSeq" id="WP_012448719.1">
    <property type="nucleotide sequence ID" value="NC_010718.1"/>
</dbReference>
<dbReference type="SMR" id="B2A8I5"/>
<dbReference type="FunCoup" id="B2A8I5">
    <property type="interactions" value="322"/>
</dbReference>
<dbReference type="STRING" id="457570.Nther_2303"/>
<dbReference type="KEGG" id="nth:Nther_2303"/>
<dbReference type="eggNOG" id="COG0282">
    <property type="taxonomic scope" value="Bacteria"/>
</dbReference>
<dbReference type="HOGENOM" id="CLU_020352_0_1_9"/>
<dbReference type="InParanoid" id="B2A8I5"/>
<dbReference type="OrthoDB" id="9802453at2"/>
<dbReference type="UniPathway" id="UPA00340">
    <property type="reaction ID" value="UER00458"/>
</dbReference>
<dbReference type="Proteomes" id="UP000001683">
    <property type="component" value="Chromosome"/>
</dbReference>
<dbReference type="GO" id="GO:0005737">
    <property type="term" value="C:cytoplasm"/>
    <property type="evidence" value="ECO:0007669"/>
    <property type="project" value="UniProtKB-SubCell"/>
</dbReference>
<dbReference type="GO" id="GO:0008776">
    <property type="term" value="F:acetate kinase activity"/>
    <property type="evidence" value="ECO:0007669"/>
    <property type="project" value="UniProtKB-UniRule"/>
</dbReference>
<dbReference type="GO" id="GO:0005524">
    <property type="term" value="F:ATP binding"/>
    <property type="evidence" value="ECO:0007669"/>
    <property type="project" value="UniProtKB-KW"/>
</dbReference>
<dbReference type="GO" id="GO:0000287">
    <property type="term" value="F:magnesium ion binding"/>
    <property type="evidence" value="ECO:0007669"/>
    <property type="project" value="UniProtKB-UniRule"/>
</dbReference>
<dbReference type="GO" id="GO:0006083">
    <property type="term" value="P:acetate metabolic process"/>
    <property type="evidence" value="ECO:0007669"/>
    <property type="project" value="TreeGrafter"/>
</dbReference>
<dbReference type="GO" id="GO:0006085">
    <property type="term" value="P:acetyl-CoA biosynthetic process"/>
    <property type="evidence" value="ECO:0007669"/>
    <property type="project" value="UniProtKB-UniRule"/>
</dbReference>
<dbReference type="CDD" id="cd24010">
    <property type="entry name" value="ASKHA_NBD_AcK_PK"/>
    <property type="match status" value="1"/>
</dbReference>
<dbReference type="Gene3D" id="3.30.420.40">
    <property type="match status" value="2"/>
</dbReference>
<dbReference type="HAMAP" id="MF_00020">
    <property type="entry name" value="Acetate_kinase"/>
    <property type="match status" value="1"/>
</dbReference>
<dbReference type="InterPro" id="IPR004372">
    <property type="entry name" value="Ac/propionate_kinase"/>
</dbReference>
<dbReference type="InterPro" id="IPR000890">
    <property type="entry name" value="Aliphatic_acid_kin_short-chain"/>
</dbReference>
<dbReference type="InterPro" id="IPR023865">
    <property type="entry name" value="Aliphatic_acid_kinase_CS"/>
</dbReference>
<dbReference type="InterPro" id="IPR043129">
    <property type="entry name" value="ATPase_NBD"/>
</dbReference>
<dbReference type="NCBIfam" id="TIGR00016">
    <property type="entry name" value="ackA"/>
    <property type="match status" value="1"/>
</dbReference>
<dbReference type="PANTHER" id="PTHR21060">
    <property type="entry name" value="ACETATE KINASE"/>
    <property type="match status" value="1"/>
</dbReference>
<dbReference type="PANTHER" id="PTHR21060:SF15">
    <property type="entry name" value="ACETATE KINASE-RELATED"/>
    <property type="match status" value="1"/>
</dbReference>
<dbReference type="Pfam" id="PF00871">
    <property type="entry name" value="Acetate_kinase"/>
    <property type="match status" value="1"/>
</dbReference>
<dbReference type="PIRSF" id="PIRSF000722">
    <property type="entry name" value="Acetate_prop_kin"/>
    <property type="match status" value="1"/>
</dbReference>
<dbReference type="PRINTS" id="PR00471">
    <property type="entry name" value="ACETATEKNASE"/>
</dbReference>
<dbReference type="SUPFAM" id="SSF53067">
    <property type="entry name" value="Actin-like ATPase domain"/>
    <property type="match status" value="2"/>
</dbReference>
<dbReference type="PROSITE" id="PS01075">
    <property type="entry name" value="ACETATE_KINASE_1"/>
    <property type="match status" value="1"/>
</dbReference>
<dbReference type="PROSITE" id="PS01076">
    <property type="entry name" value="ACETATE_KINASE_2"/>
    <property type="match status" value="1"/>
</dbReference>
<name>ACKA_NATTJ</name>
<accession>B2A8I5</accession>
<comment type="function">
    <text evidence="1">Catalyzes the formation of acetyl phosphate from acetate and ATP. Can also catalyze the reverse reaction.</text>
</comment>
<comment type="catalytic activity">
    <reaction evidence="1">
        <text>acetate + ATP = acetyl phosphate + ADP</text>
        <dbReference type="Rhea" id="RHEA:11352"/>
        <dbReference type="ChEBI" id="CHEBI:22191"/>
        <dbReference type="ChEBI" id="CHEBI:30089"/>
        <dbReference type="ChEBI" id="CHEBI:30616"/>
        <dbReference type="ChEBI" id="CHEBI:456216"/>
        <dbReference type="EC" id="2.7.2.1"/>
    </reaction>
</comment>
<comment type="cofactor">
    <cofactor evidence="1">
        <name>Mg(2+)</name>
        <dbReference type="ChEBI" id="CHEBI:18420"/>
    </cofactor>
    <cofactor evidence="1">
        <name>Mn(2+)</name>
        <dbReference type="ChEBI" id="CHEBI:29035"/>
    </cofactor>
    <text evidence="1">Mg(2+). Can also accept Mn(2+).</text>
</comment>
<comment type="pathway">
    <text evidence="1">Metabolic intermediate biosynthesis; acetyl-CoA biosynthesis; acetyl-CoA from acetate: step 1/2.</text>
</comment>
<comment type="subunit">
    <text evidence="1">Homodimer.</text>
</comment>
<comment type="subcellular location">
    <subcellularLocation>
        <location evidence="1">Cytoplasm</location>
    </subcellularLocation>
</comment>
<comment type="similarity">
    <text evidence="1">Belongs to the acetokinase family.</text>
</comment>
<sequence>MKILVINCGSSSLKYQVFNMENEDVLAKGAIERIGIEGSFLKHEPAGGEEVKIEKDVTDHKAAFKMVVDAITDEGHGVLKDLKEIEAVGHRVVHGGEEFSGSVIIDDDVMNALESCINLAPLHNPPNIYGIEASKANMPGVPQVGVFDTAFHQTMPKKAYLYGIPYEYYEKHSVRRYGFHGTSHKYVASRAADMLGKPLEDLKLITCHLGNGASVAAINKGESVDTSMGLTPLEGLVMGTRSGSMDPSIIKFLMDKEGLSIDEVDNILNKKSGVLGLSGLSNDFRDLEEAAAEGNERAENTLEVFYYTVSKYIGSYLAALNGADAIIFTAGLGENSPSVREAVTENLSYAGIKVDKDKNQVRGKETDISTDDASTRVLVVPTNEELMIAREAKGLLGK</sequence>
<evidence type="ECO:0000255" key="1">
    <source>
        <dbReference type="HAMAP-Rule" id="MF_00020"/>
    </source>
</evidence>
<proteinExistence type="inferred from homology"/>
<keyword id="KW-0067">ATP-binding</keyword>
<keyword id="KW-0963">Cytoplasm</keyword>
<keyword id="KW-0418">Kinase</keyword>
<keyword id="KW-0460">Magnesium</keyword>
<keyword id="KW-0479">Metal-binding</keyword>
<keyword id="KW-0547">Nucleotide-binding</keyword>
<keyword id="KW-1185">Reference proteome</keyword>
<keyword id="KW-0808">Transferase</keyword>
<gene>
    <name evidence="1" type="primary">ackA</name>
    <name type="ordered locus">Nther_2303</name>
</gene>
<reference key="1">
    <citation type="submission" date="2008-04" db="EMBL/GenBank/DDBJ databases">
        <title>Complete sequence of chromosome of Natranaerobius thermophilus JW/NM-WN-LF.</title>
        <authorList>
            <consortium name="US DOE Joint Genome Institute"/>
            <person name="Copeland A."/>
            <person name="Lucas S."/>
            <person name="Lapidus A."/>
            <person name="Glavina del Rio T."/>
            <person name="Dalin E."/>
            <person name="Tice H."/>
            <person name="Bruce D."/>
            <person name="Goodwin L."/>
            <person name="Pitluck S."/>
            <person name="Chertkov O."/>
            <person name="Brettin T."/>
            <person name="Detter J.C."/>
            <person name="Han C."/>
            <person name="Kuske C.R."/>
            <person name="Schmutz J."/>
            <person name="Larimer F."/>
            <person name="Land M."/>
            <person name="Hauser L."/>
            <person name="Kyrpides N."/>
            <person name="Lykidis A."/>
            <person name="Mesbah N.M."/>
            <person name="Wiegel J."/>
        </authorList>
    </citation>
    <scope>NUCLEOTIDE SEQUENCE [LARGE SCALE GENOMIC DNA]</scope>
    <source>
        <strain>ATCC BAA-1301 / DSM 18059 / JW/NM-WN-LF</strain>
    </source>
</reference>
<organism>
    <name type="scientific">Natranaerobius thermophilus (strain ATCC BAA-1301 / DSM 18059 / JW/NM-WN-LF)</name>
    <dbReference type="NCBI Taxonomy" id="457570"/>
    <lineage>
        <taxon>Bacteria</taxon>
        <taxon>Bacillati</taxon>
        <taxon>Bacillota</taxon>
        <taxon>Clostridia</taxon>
        <taxon>Natranaerobiales</taxon>
        <taxon>Natranaerobiaceae</taxon>
        <taxon>Natranaerobius</taxon>
    </lineage>
</organism>
<protein>
    <recommendedName>
        <fullName evidence="1">Acetate kinase</fullName>
        <ecNumber evidence="1">2.7.2.1</ecNumber>
    </recommendedName>
    <alternativeName>
        <fullName evidence="1">Acetokinase</fullName>
    </alternativeName>
</protein>